<proteinExistence type="inferred from homology"/>
<protein>
    <recommendedName>
        <fullName evidence="1">Protein translocase subunit SecA</fullName>
        <ecNumber evidence="1">7.4.2.8</ecNumber>
    </recommendedName>
</protein>
<evidence type="ECO:0000255" key="1">
    <source>
        <dbReference type="HAMAP-Rule" id="MF_01382"/>
    </source>
</evidence>
<evidence type="ECO:0000256" key="2">
    <source>
        <dbReference type="SAM" id="MobiDB-lite"/>
    </source>
</evidence>
<accession>A0LHJ3</accession>
<keyword id="KW-0067">ATP-binding</keyword>
<keyword id="KW-0997">Cell inner membrane</keyword>
<keyword id="KW-1003">Cell membrane</keyword>
<keyword id="KW-0963">Cytoplasm</keyword>
<keyword id="KW-0472">Membrane</keyword>
<keyword id="KW-0479">Metal-binding</keyword>
<keyword id="KW-0547">Nucleotide-binding</keyword>
<keyword id="KW-0653">Protein transport</keyword>
<keyword id="KW-1185">Reference proteome</keyword>
<keyword id="KW-1278">Translocase</keyword>
<keyword id="KW-0811">Translocation</keyword>
<keyword id="KW-0813">Transport</keyword>
<keyword id="KW-0862">Zinc</keyword>
<dbReference type="EC" id="7.4.2.8" evidence="1"/>
<dbReference type="EMBL" id="CP000478">
    <property type="protein sequence ID" value="ABK16895.1"/>
    <property type="molecule type" value="Genomic_DNA"/>
</dbReference>
<dbReference type="RefSeq" id="WP_011698066.1">
    <property type="nucleotide sequence ID" value="NC_008554.1"/>
</dbReference>
<dbReference type="SMR" id="A0LHJ3"/>
<dbReference type="FunCoup" id="A0LHJ3">
    <property type="interactions" value="579"/>
</dbReference>
<dbReference type="STRING" id="335543.Sfum_1202"/>
<dbReference type="KEGG" id="sfu:Sfum_1202"/>
<dbReference type="eggNOG" id="COG0653">
    <property type="taxonomic scope" value="Bacteria"/>
</dbReference>
<dbReference type="HOGENOM" id="CLU_005314_3_0_7"/>
<dbReference type="InParanoid" id="A0LHJ3"/>
<dbReference type="OrthoDB" id="9805579at2"/>
<dbReference type="Proteomes" id="UP000001784">
    <property type="component" value="Chromosome"/>
</dbReference>
<dbReference type="GO" id="GO:0031522">
    <property type="term" value="C:cell envelope Sec protein transport complex"/>
    <property type="evidence" value="ECO:0007669"/>
    <property type="project" value="TreeGrafter"/>
</dbReference>
<dbReference type="GO" id="GO:0005829">
    <property type="term" value="C:cytosol"/>
    <property type="evidence" value="ECO:0007669"/>
    <property type="project" value="TreeGrafter"/>
</dbReference>
<dbReference type="GO" id="GO:0005886">
    <property type="term" value="C:plasma membrane"/>
    <property type="evidence" value="ECO:0007669"/>
    <property type="project" value="UniProtKB-SubCell"/>
</dbReference>
<dbReference type="GO" id="GO:0005524">
    <property type="term" value="F:ATP binding"/>
    <property type="evidence" value="ECO:0007669"/>
    <property type="project" value="UniProtKB-UniRule"/>
</dbReference>
<dbReference type="GO" id="GO:0046872">
    <property type="term" value="F:metal ion binding"/>
    <property type="evidence" value="ECO:0007669"/>
    <property type="project" value="UniProtKB-KW"/>
</dbReference>
<dbReference type="GO" id="GO:0008564">
    <property type="term" value="F:protein-exporting ATPase activity"/>
    <property type="evidence" value="ECO:0007669"/>
    <property type="project" value="UniProtKB-EC"/>
</dbReference>
<dbReference type="GO" id="GO:0065002">
    <property type="term" value="P:intracellular protein transmembrane transport"/>
    <property type="evidence" value="ECO:0007669"/>
    <property type="project" value="UniProtKB-UniRule"/>
</dbReference>
<dbReference type="GO" id="GO:0017038">
    <property type="term" value="P:protein import"/>
    <property type="evidence" value="ECO:0007669"/>
    <property type="project" value="InterPro"/>
</dbReference>
<dbReference type="GO" id="GO:0006605">
    <property type="term" value="P:protein targeting"/>
    <property type="evidence" value="ECO:0007669"/>
    <property type="project" value="UniProtKB-UniRule"/>
</dbReference>
<dbReference type="GO" id="GO:0043952">
    <property type="term" value="P:protein transport by the Sec complex"/>
    <property type="evidence" value="ECO:0007669"/>
    <property type="project" value="TreeGrafter"/>
</dbReference>
<dbReference type="CDD" id="cd17928">
    <property type="entry name" value="DEXDc_SecA"/>
    <property type="match status" value="1"/>
</dbReference>
<dbReference type="CDD" id="cd18803">
    <property type="entry name" value="SF2_C_secA"/>
    <property type="match status" value="1"/>
</dbReference>
<dbReference type="FunFam" id="3.40.50.300:FF:000429">
    <property type="entry name" value="Preprotein translocase subunit SecA"/>
    <property type="match status" value="1"/>
</dbReference>
<dbReference type="FunFam" id="3.90.1440.10:FF:000001">
    <property type="entry name" value="Preprotein translocase subunit SecA"/>
    <property type="match status" value="1"/>
</dbReference>
<dbReference type="FunFam" id="1.10.3060.10:FF:000003">
    <property type="entry name" value="Protein translocase subunit SecA"/>
    <property type="match status" value="1"/>
</dbReference>
<dbReference type="FunFam" id="3.40.50.300:FF:000334">
    <property type="entry name" value="Protein translocase subunit SecA"/>
    <property type="match status" value="1"/>
</dbReference>
<dbReference type="Gene3D" id="1.10.3060.10">
    <property type="entry name" value="Helical scaffold and wing domains of SecA"/>
    <property type="match status" value="1"/>
</dbReference>
<dbReference type="Gene3D" id="3.40.50.300">
    <property type="entry name" value="P-loop containing nucleotide triphosphate hydrolases"/>
    <property type="match status" value="3"/>
</dbReference>
<dbReference type="Gene3D" id="3.90.1440.10">
    <property type="entry name" value="SecA, preprotein cross-linking domain"/>
    <property type="match status" value="1"/>
</dbReference>
<dbReference type="HAMAP" id="MF_01382">
    <property type="entry name" value="SecA"/>
    <property type="match status" value="1"/>
</dbReference>
<dbReference type="InterPro" id="IPR014001">
    <property type="entry name" value="Helicase_ATP-bd"/>
</dbReference>
<dbReference type="InterPro" id="IPR001650">
    <property type="entry name" value="Helicase_C-like"/>
</dbReference>
<dbReference type="InterPro" id="IPR027417">
    <property type="entry name" value="P-loop_NTPase"/>
</dbReference>
<dbReference type="InterPro" id="IPR004027">
    <property type="entry name" value="SEC_C_motif"/>
</dbReference>
<dbReference type="InterPro" id="IPR000185">
    <property type="entry name" value="SecA"/>
</dbReference>
<dbReference type="InterPro" id="IPR020937">
    <property type="entry name" value="SecA_CS"/>
</dbReference>
<dbReference type="InterPro" id="IPR011115">
    <property type="entry name" value="SecA_DEAD"/>
</dbReference>
<dbReference type="InterPro" id="IPR014018">
    <property type="entry name" value="SecA_motor_DEAD"/>
</dbReference>
<dbReference type="InterPro" id="IPR011130">
    <property type="entry name" value="SecA_preprotein_X-link_dom"/>
</dbReference>
<dbReference type="InterPro" id="IPR044722">
    <property type="entry name" value="SecA_SF2_C"/>
</dbReference>
<dbReference type="InterPro" id="IPR011116">
    <property type="entry name" value="SecA_Wing/Scaffold"/>
</dbReference>
<dbReference type="InterPro" id="IPR036266">
    <property type="entry name" value="SecA_Wing/Scaffold_sf"/>
</dbReference>
<dbReference type="InterPro" id="IPR036670">
    <property type="entry name" value="SecA_X-link_sf"/>
</dbReference>
<dbReference type="NCBIfam" id="NF006630">
    <property type="entry name" value="PRK09200.1"/>
    <property type="match status" value="1"/>
</dbReference>
<dbReference type="NCBIfam" id="NF009538">
    <property type="entry name" value="PRK12904.1"/>
    <property type="match status" value="1"/>
</dbReference>
<dbReference type="NCBIfam" id="TIGR00963">
    <property type="entry name" value="secA"/>
    <property type="match status" value="1"/>
</dbReference>
<dbReference type="PANTHER" id="PTHR30612:SF0">
    <property type="entry name" value="CHLOROPLAST PROTEIN-TRANSPORTING ATPASE"/>
    <property type="match status" value="1"/>
</dbReference>
<dbReference type="PANTHER" id="PTHR30612">
    <property type="entry name" value="SECA INNER MEMBRANE COMPONENT OF SEC PROTEIN SECRETION SYSTEM"/>
    <property type="match status" value="1"/>
</dbReference>
<dbReference type="Pfam" id="PF21090">
    <property type="entry name" value="P-loop_SecA"/>
    <property type="match status" value="2"/>
</dbReference>
<dbReference type="Pfam" id="PF02810">
    <property type="entry name" value="SEC-C"/>
    <property type="match status" value="1"/>
</dbReference>
<dbReference type="Pfam" id="PF07517">
    <property type="entry name" value="SecA_DEAD"/>
    <property type="match status" value="1"/>
</dbReference>
<dbReference type="Pfam" id="PF01043">
    <property type="entry name" value="SecA_PP_bind"/>
    <property type="match status" value="1"/>
</dbReference>
<dbReference type="Pfam" id="PF07516">
    <property type="entry name" value="SecA_SW"/>
    <property type="match status" value="1"/>
</dbReference>
<dbReference type="PRINTS" id="PR00906">
    <property type="entry name" value="SECA"/>
</dbReference>
<dbReference type="SMART" id="SM00957">
    <property type="entry name" value="SecA_DEAD"/>
    <property type="match status" value="1"/>
</dbReference>
<dbReference type="SMART" id="SM00958">
    <property type="entry name" value="SecA_PP_bind"/>
    <property type="match status" value="1"/>
</dbReference>
<dbReference type="SUPFAM" id="SSF81886">
    <property type="entry name" value="Helical scaffold and wing domains of SecA"/>
    <property type="match status" value="1"/>
</dbReference>
<dbReference type="SUPFAM" id="SSF52540">
    <property type="entry name" value="P-loop containing nucleoside triphosphate hydrolases"/>
    <property type="match status" value="2"/>
</dbReference>
<dbReference type="SUPFAM" id="SSF81767">
    <property type="entry name" value="Pre-protein crosslinking domain of SecA"/>
    <property type="match status" value="1"/>
</dbReference>
<dbReference type="PROSITE" id="PS01312">
    <property type="entry name" value="SECA"/>
    <property type="match status" value="1"/>
</dbReference>
<dbReference type="PROSITE" id="PS51196">
    <property type="entry name" value="SECA_MOTOR_DEAD"/>
    <property type="match status" value="1"/>
</dbReference>
<sequence>MLTDILKKIFGSQNERILKRIAPLVDEINSYEPVMRKLSDAALKAKTPEFKQRIANGEPLDDLLPEAFAVAREGAVRTLGMRPFDVQMIGGIVLHEGMIAEMKTGEGKTLVAVMPIYLNALTGRGVHLVTVNDYLARRDSEWMGQVYKFLGLSVGCIVHGLDDPERKEAYGADVTYGTNNEYGFDYLRDNMKFRIEDMVQRELNYAIVDEVDSILIDEARTPLIISGPAEKSTALYYNINRIIPQLKPETHYTKEEKSRTVALTEDGVTRTEKLLGVDNLYDPRQIDILHHVQQALRAHVLFKRDVDYIVKDGKVIIVDEFTGRLMPGRRYSEGLHQALEAKENVHIENENQTLASITFQNYFRMFDKLAGMTGTAETEAAEFAKIYKLEVVVIPTHRKMIREDYADCIYRTEAEKFRAVAEEIKEAYAVKRPVLVGTVNIAKSEKLSGILKRQGVPHQVLNAKHHEKEAEIVALAGQPGAVTISTNMAGRGTDIVLGPGVVDVGGLHIIGTERHEARRIDNQLRGRSGRQGDPGSSRFYLSLEDDLMRIFAADRLSGLMQRIGMKEDEPIEHRLITKAIENAQSKVEAQNFSIRKQLLEYDDVMNQQREVIYRQRREALQGENLKPVVLDMIEDLLEGILAETADEKHYAEDWDLEKINSEVLRLFGLQMNLTVESLGDIEYEEFRDSLLERLTKRYEAREQEFGESMMRELESYLLLQTVDTYWKDHLLNMDHLKEGIGLRGYGQQDPLIAYKREGHALFDEMIERIKEETIRLLFHIQIQREEQLDELRKEQEDQPMFFGPAEGAGQKPQTRKDRKVGRNDPCPCGSGKKYKKCCGK</sequence>
<reference key="1">
    <citation type="submission" date="2006-10" db="EMBL/GenBank/DDBJ databases">
        <title>Complete sequence of Syntrophobacter fumaroxidans MPOB.</title>
        <authorList>
            <consortium name="US DOE Joint Genome Institute"/>
            <person name="Copeland A."/>
            <person name="Lucas S."/>
            <person name="Lapidus A."/>
            <person name="Barry K."/>
            <person name="Detter J.C."/>
            <person name="Glavina del Rio T."/>
            <person name="Hammon N."/>
            <person name="Israni S."/>
            <person name="Pitluck S."/>
            <person name="Goltsman E.G."/>
            <person name="Martinez M."/>
            <person name="Schmutz J."/>
            <person name="Larimer F."/>
            <person name="Land M."/>
            <person name="Hauser L."/>
            <person name="Kyrpides N."/>
            <person name="Kim E."/>
            <person name="Boone D.R."/>
            <person name="Brockman F."/>
            <person name="Culley D."/>
            <person name="Ferry J."/>
            <person name="Gunsalus R."/>
            <person name="McInerney M.J."/>
            <person name="Morrison M."/>
            <person name="Plugge C."/>
            <person name="Rohlin L."/>
            <person name="Scholten J."/>
            <person name="Sieber J."/>
            <person name="Stams A.J.M."/>
            <person name="Worm P."/>
            <person name="Henstra A.M."/>
            <person name="Richardson P."/>
        </authorList>
    </citation>
    <scope>NUCLEOTIDE SEQUENCE [LARGE SCALE GENOMIC DNA]</scope>
    <source>
        <strain>DSM 10017 / MPOB</strain>
    </source>
</reference>
<name>SECA_SYNFM</name>
<gene>
    <name evidence="1" type="primary">secA</name>
    <name type="ordered locus">Sfum_1202</name>
</gene>
<feature type="chain" id="PRO_0000321020" description="Protein translocase subunit SecA">
    <location>
        <begin position="1"/>
        <end position="840"/>
    </location>
</feature>
<feature type="region of interest" description="Disordered" evidence="2">
    <location>
        <begin position="791"/>
        <end position="840"/>
    </location>
</feature>
<feature type="binding site" evidence="1">
    <location>
        <position position="87"/>
    </location>
    <ligand>
        <name>ATP</name>
        <dbReference type="ChEBI" id="CHEBI:30616"/>
    </ligand>
</feature>
<feature type="binding site" evidence="1">
    <location>
        <begin position="105"/>
        <end position="109"/>
    </location>
    <ligand>
        <name>ATP</name>
        <dbReference type="ChEBI" id="CHEBI:30616"/>
    </ligand>
</feature>
<feature type="binding site" evidence="1">
    <location>
        <position position="494"/>
    </location>
    <ligand>
        <name>ATP</name>
        <dbReference type="ChEBI" id="CHEBI:30616"/>
    </ligand>
</feature>
<feature type="binding site" evidence="1">
    <location>
        <position position="826"/>
    </location>
    <ligand>
        <name>Zn(2+)</name>
        <dbReference type="ChEBI" id="CHEBI:29105"/>
    </ligand>
</feature>
<feature type="binding site" evidence="1">
    <location>
        <position position="828"/>
    </location>
    <ligand>
        <name>Zn(2+)</name>
        <dbReference type="ChEBI" id="CHEBI:29105"/>
    </ligand>
</feature>
<feature type="binding site" evidence="1">
    <location>
        <position position="837"/>
    </location>
    <ligand>
        <name>Zn(2+)</name>
        <dbReference type="ChEBI" id="CHEBI:29105"/>
    </ligand>
</feature>
<feature type="binding site" evidence="1">
    <location>
        <position position="838"/>
    </location>
    <ligand>
        <name>Zn(2+)</name>
        <dbReference type="ChEBI" id="CHEBI:29105"/>
    </ligand>
</feature>
<comment type="function">
    <text evidence="1">Part of the Sec protein translocase complex. Interacts with the SecYEG preprotein conducting channel. Has a central role in coupling the hydrolysis of ATP to the transfer of proteins into and across the cell membrane, serving as an ATP-driven molecular motor driving the stepwise translocation of polypeptide chains across the membrane.</text>
</comment>
<comment type="catalytic activity">
    <reaction evidence="1">
        <text>ATP + H2O + cellular proteinSide 1 = ADP + phosphate + cellular proteinSide 2.</text>
        <dbReference type="EC" id="7.4.2.8"/>
    </reaction>
</comment>
<comment type="cofactor">
    <cofactor evidence="1">
        <name>Zn(2+)</name>
        <dbReference type="ChEBI" id="CHEBI:29105"/>
    </cofactor>
    <text evidence="1">May bind 1 zinc ion per subunit.</text>
</comment>
<comment type="subunit">
    <text evidence="1">Monomer and homodimer. Part of the essential Sec protein translocation apparatus which comprises SecA, SecYEG and auxiliary proteins SecDF-YajC and YidC.</text>
</comment>
<comment type="subcellular location">
    <subcellularLocation>
        <location evidence="1">Cell inner membrane</location>
        <topology evidence="1">Peripheral membrane protein</topology>
        <orientation evidence="1">Cytoplasmic side</orientation>
    </subcellularLocation>
    <subcellularLocation>
        <location evidence="1">Cytoplasm</location>
    </subcellularLocation>
    <text evidence="1">Distribution is 50-50.</text>
</comment>
<comment type="similarity">
    <text evidence="1">Belongs to the SecA family.</text>
</comment>
<organism>
    <name type="scientific">Syntrophobacter fumaroxidans (strain DSM 10017 / MPOB)</name>
    <dbReference type="NCBI Taxonomy" id="335543"/>
    <lineage>
        <taxon>Bacteria</taxon>
        <taxon>Pseudomonadati</taxon>
        <taxon>Thermodesulfobacteriota</taxon>
        <taxon>Syntrophobacteria</taxon>
        <taxon>Syntrophobacterales</taxon>
        <taxon>Syntrophobacteraceae</taxon>
        <taxon>Syntrophobacter</taxon>
    </lineage>
</organism>